<reference key="1">
    <citation type="submission" date="2007-08" db="EMBL/GenBank/DDBJ databases">
        <title>Complete sequence of Roseiflexus castenholzii DSM 13941.</title>
        <authorList>
            <consortium name="US DOE Joint Genome Institute"/>
            <person name="Copeland A."/>
            <person name="Lucas S."/>
            <person name="Lapidus A."/>
            <person name="Barry K."/>
            <person name="Glavina del Rio T."/>
            <person name="Dalin E."/>
            <person name="Tice H."/>
            <person name="Pitluck S."/>
            <person name="Thompson L.S."/>
            <person name="Brettin T."/>
            <person name="Bruce D."/>
            <person name="Detter J.C."/>
            <person name="Han C."/>
            <person name="Tapia R."/>
            <person name="Schmutz J."/>
            <person name="Larimer F."/>
            <person name="Land M."/>
            <person name="Hauser L."/>
            <person name="Kyrpides N."/>
            <person name="Mikhailova N."/>
            <person name="Bryant D.A."/>
            <person name="Hanada S."/>
            <person name="Tsukatani Y."/>
            <person name="Richardson P."/>
        </authorList>
    </citation>
    <scope>NUCLEOTIDE SEQUENCE [LARGE SCALE GENOMIC DNA]</scope>
    <source>
        <strain>DSM 13941 / HLO8</strain>
    </source>
</reference>
<accession>A7NRY4</accession>
<dbReference type="EC" id="2.5.1.141"/>
<dbReference type="EMBL" id="CP000804">
    <property type="protein sequence ID" value="ABU60330.1"/>
    <property type="molecule type" value="Genomic_DNA"/>
</dbReference>
<dbReference type="RefSeq" id="WP_012122751.1">
    <property type="nucleotide sequence ID" value="NC_009767.1"/>
</dbReference>
<dbReference type="SMR" id="A7NRY4"/>
<dbReference type="STRING" id="383372.Rcas_4304"/>
<dbReference type="KEGG" id="rca:Rcas_4304"/>
<dbReference type="eggNOG" id="COG0109">
    <property type="taxonomic scope" value="Bacteria"/>
</dbReference>
<dbReference type="eggNOG" id="COG1612">
    <property type="taxonomic scope" value="Bacteria"/>
</dbReference>
<dbReference type="HOGENOM" id="CLU_030009_1_1_0"/>
<dbReference type="OrthoDB" id="9814417at2"/>
<dbReference type="UniPathway" id="UPA00834">
    <property type="reaction ID" value="UER00712"/>
</dbReference>
<dbReference type="Proteomes" id="UP000000263">
    <property type="component" value="Chromosome"/>
</dbReference>
<dbReference type="GO" id="GO:0005886">
    <property type="term" value="C:plasma membrane"/>
    <property type="evidence" value="ECO:0007669"/>
    <property type="project" value="UniProtKB-SubCell"/>
</dbReference>
<dbReference type="GO" id="GO:0008495">
    <property type="term" value="F:protoheme IX farnesyltransferase activity"/>
    <property type="evidence" value="ECO:0007669"/>
    <property type="project" value="UniProtKB-UniRule"/>
</dbReference>
<dbReference type="GO" id="GO:0048034">
    <property type="term" value="P:heme O biosynthetic process"/>
    <property type="evidence" value="ECO:0007669"/>
    <property type="project" value="UniProtKB-UniRule"/>
</dbReference>
<dbReference type="CDD" id="cd13957">
    <property type="entry name" value="PT_UbiA_Cox10"/>
    <property type="match status" value="1"/>
</dbReference>
<dbReference type="FunFam" id="1.10.357.140:FF:000001">
    <property type="entry name" value="Protoheme IX farnesyltransferase"/>
    <property type="match status" value="1"/>
</dbReference>
<dbReference type="Gene3D" id="1.10.357.140">
    <property type="entry name" value="UbiA prenyltransferase"/>
    <property type="match status" value="1"/>
</dbReference>
<dbReference type="HAMAP" id="MF_00154">
    <property type="entry name" value="CyoE_CtaB"/>
    <property type="match status" value="1"/>
</dbReference>
<dbReference type="InterPro" id="IPR006369">
    <property type="entry name" value="Protohaem_IX_farnesylTrfase"/>
</dbReference>
<dbReference type="InterPro" id="IPR000537">
    <property type="entry name" value="UbiA_prenyltransferase"/>
</dbReference>
<dbReference type="InterPro" id="IPR030470">
    <property type="entry name" value="UbiA_prenylTrfase_CS"/>
</dbReference>
<dbReference type="InterPro" id="IPR044878">
    <property type="entry name" value="UbiA_sf"/>
</dbReference>
<dbReference type="NCBIfam" id="TIGR01473">
    <property type="entry name" value="cyoE_ctaB"/>
    <property type="match status" value="1"/>
</dbReference>
<dbReference type="NCBIfam" id="NF003349">
    <property type="entry name" value="PRK04375.1-2"/>
    <property type="match status" value="1"/>
</dbReference>
<dbReference type="PANTHER" id="PTHR43448:SF7">
    <property type="entry name" value="4-HYDROXYBENZOATE SOLANESYLTRANSFERASE"/>
    <property type="match status" value="1"/>
</dbReference>
<dbReference type="PANTHER" id="PTHR43448">
    <property type="entry name" value="PROTOHEME IX FARNESYLTRANSFERASE, MITOCHONDRIAL"/>
    <property type="match status" value="1"/>
</dbReference>
<dbReference type="Pfam" id="PF01040">
    <property type="entry name" value="UbiA"/>
    <property type="match status" value="1"/>
</dbReference>
<dbReference type="PROSITE" id="PS00943">
    <property type="entry name" value="UBIA"/>
    <property type="match status" value="1"/>
</dbReference>
<protein>
    <recommendedName>
        <fullName>Protoheme IX farnesyltransferase</fullName>
        <ecNumber>2.5.1.141</ecNumber>
    </recommendedName>
    <alternativeName>
        <fullName>Heme B farnesyltransferase</fullName>
    </alternativeName>
    <alternativeName>
        <fullName>Heme O synthase</fullName>
    </alternativeName>
</protein>
<feature type="chain" id="PRO_0000346081" description="Protoheme IX farnesyltransferase">
    <location>
        <begin position="1"/>
        <end position="535"/>
    </location>
</feature>
<feature type="transmembrane region" description="Helical" evidence="2">
    <location>
        <begin position="18"/>
        <end position="38"/>
    </location>
</feature>
<feature type="transmembrane region" description="Helical" evidence="2">
    <location>
        <begin position="40"/>
        <end position="60"/>
    </location>
</feature>
<feature type="transmembrane region" description="Helical" evidence="2">
    <location>
        <begin position="83"/>
        <end position="103"/>
    </location>
</feature>
<feature type="transmembrane region" description="Helical" evidence="2">
    <location>
        <begin position="127"/>
        <end position="147"/>
    </location>
</feature>
<feature type="transmembrane region" description="Helical" evidence="2">
    <location>
        <begin position="163"/>
        <end position="183"/>
    </location>
</feature>
<feature type="transmembrane region" description="Helical" evidence="2">
    <location>
        <begin position="197"/>
        <end position="217"/>
    </location>
</feature>
<feature type="transmembrane region" description="Helical" evidence="2">
    <location>
        <begin position="262"/>
        <end position="282"/>
    </location>
</feature>
<feature type="transmembrane region" description="Helical" evidence="2">
    <location>
        <begin position="285"/>
        <end position="305"/>
    </location>
</feature>
<feature type="transmembrane region" description="Helical" evidence="2">
    <location>
        <begin position="334"/>
        <end position="354"/>
    </location>
</feature>
<feature type="transmembrane region" description="Helical" evidence="2">
    <location>
        <begin position="357"/>
        <end position="377"/>
    </location>
</feature>
<feature type="transmembrane region" description="Helical" evidence="2">
    <location>
        <begin position="385"/>
        <end position="405"/>
    </location>
</feature>
<feature type="transmembrane region" description="Helical" evidence="2">
    <location>
        <begin position="412"/>
        <end position="432"/>
    </location>
</feature>
<feature type="transmembrane region" description="Helical" evidence="2">
    <location>
        <begin position="474"/>
        <end position="494"/>
    </location>
</feature>
<feature type="transmembrane region" description="Helical" evidence="2">
    <location>
        <begin position="509"/>
        <end position="529"/>
    </location>
</feature>
<feature type="region of interest" description="Unknown">
    <location>
        <begin position="1"/>
        <end position="263"/>
    </location>
</feature>
<feature type="region of interest" description="Protoheme IX prenyltransferase">
    <location>
        <begin position="264"/>
        <end position="535"/>
    </location>
</feature>
<comment type="function">
    <text evidence="1">Converts heme B (protoheme IX) to heme O by substitution of the vinyl group on carbon 2 of heme B porphyrin ring with a hydroxyethyl farnesyl side group.</text>
</comment>
<comment type="catalytic activity">
    <reaction>
        <text>heme b + (2E,6E)-farnesyl diphosphate + H2O = Fe(II)-heme o + diphosphate</text>
        <dbReference type="Rhea" id="RHEA:28070"/>
        <dbReference type="ChEBI" id="CHEBI:15377"/>
        <dbReference type="ChEBI" id="CHEBI:33019"/>
        <dbReference type="ChEBI" id="CHEBI:60344"/>
        <dbReference type="ChEBI" id="CHEBI:60530"/>
        <dbReference type="ChEBI" id="CHEBI:175763"/>
        <dbReference type="EC" id="2.5.1.141"/>
    </reaction>
</comment>
<comment type="pathway">
    <text>Porphyrin-containing compound metabolism; heme O biosynthesis; heme O from protoheme: step 1/1.</text>
</comment>
<comment type="subcellular location">
    <subcellularLocation>
        <location evidence="3">Cell membrane</location>
        <topology evidence="3">Multi-pass membrane protein</topology>
    </subcellularLocation>
</comment>
<comment type="miscellaneous">
    <text evidence="1">Carbon 2 of the heme B porphyrin ring is defined according to the Fischer nomenclature.</text>
</comment>
<comment type="similarity">
    <text evidence="3">In the C-terminal section; belongs to the UbiA prenyltransferase family. Protoheme IX farnesyltransferase subfamily.</text>
</comment>
<keyword id="KW-1003">Cell membrane</keyword>
<keyword id="KW-0350">Heme biosynthesis</keyword>
<keyword id="KW-0472">Membrane</keyword>
<keyword id="KW-1185">Reference proteome</keyword>
<keyword id="KW-0808">Transferase</keyword>
<keyword id="KW-0812">Transmembrane</keyword>
<keyword id="KW-1133">Transmembrane helix</keyword>
<organism>
    <name type="scientific">Roseiflexus castenholzii (strain DSM 13941 / HLO8)</name>
    <dbReference type="NCBI Taxonomy" id="383372"/>
    <lineage>
        <taxon>Bacteria</taxon>
        <taxon>Bacillati</taxon>
        <taxon>Chloroflexota</taxon>
        <taxon>Chloroflexia</taxon>
        <taxon>Chloroflexales</taxon>
        <taxon>Roseiflexineae</taxon>
        <taxon>Roseiflexaceae</taxon>
        <taxon>Roseiflexus</taxon>
    </lineage>
</organism>
<gene>
    <name type="primary">ctaB</name>
    <name type="ordered locus">Rcas_4304</name>
</gene>
<name>COXX_ROSCS</name>
<sequence length="535" mass="57083">MRRENARVVALPLFRTSWMVIALALVAYGAILAGSIIPTMTGAAVSSIATAVLGGALAMYTGMRTRAAPVRLGGRATAARRSYLTLAFAAVGMLYLAVVAGALNTSAGTLWTCQTWPGCEASGSGDWPALAHRGLAGVATILIAALAMQTWRIRHERALRVAVACALGLMLVQNIVGLVQVLLAQAGESLPLAVARLTHLGLSATAWGALVVLVTLALRRPFPSVVAAPSPATVARPGLTDTTLLEGKPSLLKDYVSLTKPGVISLLILTTITSMYITPAGIPEWSLVLWTTIGGWLMASGSHSINCYLDKDIDINMGRTSRRPIPSGRIPAWHALALGVVLGMIAFAILAIFVNMLTALLALAGFFYYVVIYTIWLKRTSKHNIVIGGGAGAFPPLVGWAAVTGSLAPEALLLWLIVFFWTPPHFWALALIREKDYARAGVPMLPVVAGDVETRRQIVLYTLSMLALTALPPLLGMLGWSYLLMASIFGGLFLYYALKLRRDGTTATAWALYKYSLLYLALLFVAMVVDRAVFA</sequence>
<proteinExistence type="inferred from homology"/>
<evidence type="ECO:0000250" key="1"/>
<evidence type="ECO:0000255" key="2"/>
<evidence type="ECO:0000305" key="3"/>